<gene>
    <name evidence="1" type="primary">rlmN</name>
    <name type="ordered locus">PSPPH_1317</name>
</gene>
<sequence length="382" mass="42285">MIASTGKTNLLGLTQQEMEKFFDSIGEKRFRAGQVMKWIHHFGVDDFDAMTNVSKALREKLKACAEVRGPEVVSEDISSDGTRKWVVRVESGSCVETVYIPQGKRGTLCVSSQAGCALDCSFCSTGKQGFNSNLTAAEVIGQVWIANKSFGSVPATVDRAITNVVMMGMGEPLLNFDNVIAAMHLMMDDLGYGISKRRVTLSTSGVVPMIDELSKHIDVSLALSLHAPNDALRNQLVPINKKYPLQMLLDSCRRYMSSLGEKRVLTIEYTMLKDINDKVEHAVEMIELLKDTPCKINLIPFNPFPHSGYERPSNNAIRRFQDLLHQAGYNVTVRTTRGEDIDAACGQLVGQVMDRTRRSERYIAVRELSAEAETAPVAATRT</sequence>
<proteinExistence type="inferred from homology"/>
<comment type="function">
    <text evidence="1">Specifically methylates position 2 of adenine 2503 in 23S rRNA and position 2 of adenine 37 in tRNAs. m2A2503 modification seems to play a crucial role in the proofreading step occurring at the peptidyl transferase center and thus would serve to optimize ribosomal fidelity.</text>
</comment>
<comment type="catalytic activity">
    <reaction evidence="1">
        <text>adenosine(2503) in 23S rRNA + 2 reduced [2Fe-2S]-[ferredoxin] + 2 S-adenosyl-L-methionine = 2-methyladenosine(2503) in 23S rRNA + 5'-deoxyadenosine + L-methionine + 2 oxidized [2Fe-2S]-[ferredoxin] + S-adenosyl-L-homocysteine</text>
        <dbReference type="Rhea" id="RHEA:42916"/>
        <dbReference type="Rhea" id="RHEA-COMP:10000"/>
        <dbReference type="Rhea" id="RHEA-COMP:10001"/>
        <dbReference type="Rhea" id="RHEA-COMP:10152"/>
        <dbReference type="Rhea" id="RHEA-COMP:10282"/>
        <dbReference type="ChEBI" id="CHEBI:17319"/>
        <dbReference type="ChEBI" id="CHEBI:33737"/>
        <dbReference type="ChEBI" id="CHEBI:33738"/>
        <dbReference type="ChEBI" id="CHEBI:57844"/>
        <dbReference type="ChEBI" id="CHEBI:57856"/>
        <dbReference type="ChEBI" id="CHEBI:59789"/>
        <dbReference type="ChEBI" id="CHEBI:74411"/>
        <dbReference type="ChEBI" id="CHEBI:74497"/>
        <dbReference type="EC" id="2.1.1.192"/>
    </reaction>
</comment>
<comment type="catalytic activity">
    <reaction evidence="1">
        <text>adenosine(37) in tRNA + 2 reduced [2Fe-2S]-[ferredoxin] + 2 S-adenosyl-L-methionine = 2-methyladenosine(37) in tRNA + 5'-deoxyadenosine + L-methionine + 2 oxidized [2Fe-2S]-[ferredoxin] + S-adenosyl-L-homocysteine</text>
        <dbReference type="Rhea" id="RHEA:43332"/>
        <dbReference type="Rhea" id="RHEA-COMP:10000"/>
        <dbReference type="Rhea" id="RHEA-COMP:10001"/>
        <dbReference type="Rhea" id="RHEA-COMP:10162"/>
        <dbReference type="Rhea" id="RHEA-COMP:10485"/>
        <dbReference type="ChEBI" id="CHEBI:17319"/>
        <dbReference type="ChEBI" id="CHEBI:33737"/>
        <dbReference type="ChEBI" id="CHEBI:33738"/>
        <dbReference type="ChEBI" id="CHEBI:57844"/>
        <dbReference type="ChEBI" id="CHEBI:57856"/>
        <dbReference type="ChEBI" id="CHEBI:59789"/>
        <dbReference type="ChEBI" id="CHEBI:74411"/>
        <dbReference type="ChEBI" id="CHEBI:74497"/>
        <dbReference type="EC" id="2.1.1.192"/>
    </reaction>
</comment>
<comment type="cofactor">
    <cofactor evidence="1">
        <name>[4Fe-4S] cluster</name>
        <dbReference type="ChEBI" id="CHEBI:49883"/>
    </cofactor>
    <text evidence="1">Binds 1 [4Fe-4S] cluster. The cluster is coordinated with 3 cysteines and an exchangeable S-adenosyl-L-methionine.</text>
</comment>
<comment type="subcellular location">
    <subcellularLocation>
        <location evidence="1">Cytoplasm</location>
    </subcellularLocation>
</comment>
<comment type="miscellaneous">
    <text evidence="1">Reaction proceeds by a ping-pong mechanism involving intermediate methylation of a conserved cysteine residue.</text>
</comment>
<comment type="similarity">
    <text evidence="1">Belongs to the radical SAM superfamily. RlmN family.</text>
</comment>
<name>RLMN_PSE14</name>
<dbReference type="EC" id="2.1.1.192" evidence="1"/>
<dbReference type="EMBL" id="CP000058">
    <property type="protein sequence ID" value="AAZ37847.1"/>
    <property type="molecule type" value="Genomic_DNA"/>
</dbReference>
<dbReference type="RefSeq" id="WP_002552483.1">
    <property type="nucleotide sequence ID" value="NC_005773.3"/>
</dbReference>
<dbReference type="SMR" id="Q48LZ7"/>
<dbReference type="GeneID" id="61868674"/>
<dbReference type="KEGG" id="psp:PSPPH_1317"/>
<dbReference type="eggNOG" id="COG0820">
    <property type="taxonomic scope" value="Bacteria"/>
</dbReference>
<dbReference type="HOGENOM" id="CLU_029101_0_0_6"/>
<dbReference type="Proteomes" id="UP000000551">
    <property type="component" value="Chromosome"/>
</dbReference>
<dbReference type="GO" id="GO:0005737">
    <property type="term" value="C:cytoplasm"/>
    <property type="evidence" value="ECO:0007669"/>
    <property type="project" value="UniProtKB-SubCell"/>
</dbReference>
<dbReference type="GO" id="GO:0051539">
    <property type="term" value="F:4 iron, 4 sulfur cluster binding"/>
    <property type="evidence" value="ECO:0007669"/>
    <property type="project" value="UniProtKB-UniRule"/>
</dbReference>
<dbReference type="GO" id="GO:0046872">
    <property type="term" value="F:metal ion binding"/>
    <property type="evidence" value="ECO:0007669"/>
    <property type="project" value="UniProtKB-KW"/>
</dbReference>
<dbReference type="GO" id="GO:0070040">
    <property type="term" value="F:rRNA (adenine(2503)-C2-)-methyltransferase activity"/>
    <property type="evidence" value="ECO:0007669"/>
    <property type="project" value="UniProtKB-UniRule"/>
</dbReference>
<dbReference type="GO" id="GO:0019843">
    <property type="term" value="F:rRNA binding"/>
    <property type="evidence" value="ECO:0007669"/>
    <property type="project" value="UniProtKB-UniRule"/>
</dbReference>
<dbReference type="GO" id="GO:0002935">
    <property type="term" value="F:tRNA (adenine(37)-C2)-methyltransferase activity"/>
    <property type="evidence" value="ECO:0007669"/>
    <property type="project" value="UniProtKB-UniRule"/>
</dbReference>
<dbReference type="GO" id="GO:0000049">
    <property type="term" value="F:tRNA binding"/>
    <property type="evidence" value="ECO:0007669"/>
    <property type="project" value="UniProtKB-UniRule"/>
</dbReference>
<dbReference type="GO" id="GO:0070475">
    <property type="term" value="P:rRNA base methylation"/>
    <property type="evidence" value="ECO:0007669"/>
    <property type="project" value="UniProtKB-UniRule"/>
</dbReference>
<dbReference type="GO" id="GO:0030488">
    <property type="term" value="P:tRNA methylation"/>
    <property type="evidence" value="ECO:0007669"/>
    <property type="project" value="UniProtKB-UniRule"/>
</dbReference>
<dbReference type="CDD" id="cd01335">
    <property type="entry name" value="Radical_SAM"/>
    <property type="match status" value="1"/>
</dbReference>
<dbReference type="FunFam" id="1.10.150.530:FF:000003">
    <property type="entry name" value="Dual-specificity RNA methyltransferase RlmN"/>
    <property type="match status" value="1"/>
</dbReference>
<dbReference type="FunFam" id="3.20.20.70:FF:000008">
    <property type="entry name" value="Dual-specificity RNA methyltransferase RlmN"/>
    <property type="match status" value="1"/>
</dbReference>
<dbReference type="Gene3D" id="1.10.150.530">
    <property type="match status" value="1"/>
</dbReference>
<dbReference type="Gene3D" id="3.20.20.70">
    <property type="entry name" value="Aldolase class I"/>
    <property type="match status" value="1"/>
</dbReference>
<dbReference type="HAMAP" id="MF_01849">
    <property type="entry name" value="RNA_methyltr_RlmN"/>
    <property type="match status" value="1"/>
</dbReference>
<dbReference type="InterPro" id="IPR013785">
    <property type="entry name" value="Aldolase_TIM"/>
</dbReference>
<dbReference type="InterPro" id="IPR040072">
    <property type="entry name" value="Methyltransferase_A"/>
</dbReference>
<dbReference type="InterPro" id="IPR048641">
    <property type="entry name" value="RlmN_N"/>
</dbReference>
<dbReference type="InterPro" id="IPR027492">
    <property type="entry name" value="RNA_MTrfase_RlmN"/>
</dbReference>
<dbReference type="InterPro" id="IPR004383">
    <property type="entry name" value="rRNA_lsu_MTrfase_RlmN/Cfr"/>
</dbReference>
<dbReference type="InterPro" id="IPR007197">
    <property type="entry name" value="rSAM"/>
</dbReference>
<dbReference type="NCBIfam" id="TIGR00048">
    <property type="entry name" value="rRNA_mod_RlmN"/>
    <property type="match status" value="1"/>
</dbReference>
<dbReference type="PANTHER" id="PTHR30544">
    <property type="entry name" value="23S RRNA METHYLTRANSFERASE"/>
    <property type="match status" value="1"/>
</dbReference>
<dbReference type="PANTHER" id="PTHR30544:SF5">
    <property type="entry name" value="RADICAL SAM CORE DOMAIN-CONTAINING PROTEIN"/>
    <property type="match status" value="1"/>
</dbReference>
<dbReference type="Pfam" id="PF04055">
    <property type="entry name" value="Radical_SAM"/>
    <property type="match status" value="1"/>
</dbReference>
<dbReference type="Pfam" id="PF21016">
    <property type="entry name" value="RlmN_N"/>
    <property type="match status" value="1"/>
</dbReference>
<dbReference type="PIRSF" id="PIRSF006004">
    <property type="entry name" value="CHP00048"/>
    <property type="match status" value="1"/>
</dbReference>
<dbReference type="SFLD" id="SFLDF00275">
    <property type="entry name" value="adenosine_C2_methyltransferase"/>
    <property type="match status" value="1"/>
</dbReference>
<dbReference type="SFLD" id="SFLDG01062">
    <property type="entry name" value="methyltransferase_(Class_A)"/>
    <property type="match status" value="1"/>
</dbReference>
<dbReference type="SUPFAM" id="SSF102114">
    <property type="entry name" value="Radical SAM enzymes"/>
    <property type="match status" value="1"/>
</dbReference>
<dbReference type="PROSITE" id="PS51918">
    <property type="entry name" value="RADICAL_SAM"/>
    <property type="match status" value="1"/>
</dbReference>
<organism>
    <name type="scientific">Pseudomonas savastanoi pv. phaseolicola (strain 1448A / Race 6)</name>
    <name type="common">Pseudomonas syringae pv. phaseolicola (strain 1448A / Race 6)</name>
    <dbReference type="NCBI Taxonomy" id="264730"/>
    <lineage>
        <taxon>Bacteria</taxon>
        <taxon>Pseudomonadati</taxon>
        <taxon>Pseudomonadota</taxon>
        <taxon>Gammaproteobacteria</taxon>
        <taxon>Pseudomonadales</taxon>
        <taxon>Pseudomonadaceae</taxon>
        <taxon>Pseudomonas</taxon>
    </lineage>
</organism>
<feature type="chain" id="PRO_0000350346" description="Dual-specificity RNA methyltransferase RlmN">
    <location>
        <begin position="1"/>
        <end position="382"/>
    </location>
</feature>
<feature type="domain" description="Radical SAM core" evidence="2">
    <location>
        <begin position="102"/>
        <end position="342"/>
    </location>
</feature>
<feature type="active site" description="Proton acceptor" evidence="1">
    <location>
        <position position="96"/>
    </location>
</feature>
<feature type="active site" description="S-methylcysteine intermediate" evidence="1">
    <location>
        <position position="345"/>
    </location>
</feature>
<feature type="binding site" evidence="1">
    <location>
        <position position="116"/>
    </location>
    <ligand>
        <name>[4Fe-4S] cluster</name>
        <dbReference type="ChEBI" id="CHEBI:49883"/>
        <note>4Fe-4S-S-AdoMet</note>
    </ligand>
</feature>
<feature type="binding site" evidence="1">
    <location>
        <position position="120"/>
    </location>
    <ligand>
        <name>[4Fe-4S] cluster</name>
        <dbReference type="ChEBI" id="CHEBI:49883"/>
        <note>4Fe-4S-S-AdoMet</note>
    </ligand>
</feature>
<feature type="binding site" evidence="1">
    <location>
        <position position="123"/>
    </location>
    <ligand>
        <name>[4Fe-4S] cluster</name>
        <dbReference type="ChEBI" id="CHEBI:49883"/>
        <note>4Fe-4S-S-AdoMet</note>
    </ligand>
</feature>
<feature type="binding site" evidence="1">
    <location>
        <begin position="170"/>
        <end position="171"/>
    </location>
    <ligand>
        <name>S-adenosyl-L-methionine</name>
        <dbReference type="ChEBI" id="CHEBI:59789"/>
    </ligand>
</feature>
<feature type="binding site" evidence="1">
    <location>
        <position position="202"/>
    </location>
    <ligand>
        <name>S-adenosyl-L-methionine</name>
        <dbReference type="ChEBI" id="CHEBI:59789"/>
    </ligand>
</feature>
<feature type="binding site" evidence="1">
    <location>
        <begin position="224"/>
        <end position="226"/>
    </location>
    <ligand>
        <name>S-adenosyl-L-methionine</name>
        <dbReference type="ChEBI" id="CHEBI:59789"/>
    </ligand>
</feature>
<feature type="binding site" evidence="1">
    <location>
        <position position="302"/>
    </location>
    <ligand>
        <name>S-adenosyl-L-methionine</name>
        <dbReference type="ChEBI" id="CHEBI:59789"/>
    </ligand>
</feature>
<feature type="disulfide bond" description="(transient)" evidence="1">
    <location>
        <begin position="109"/>
        <end position="345"/>
    </location>
</feature>
<reference key="1">
    <citation type="journal article" date="2005" name="J. Bacteriol.">
        <title>Whole-genome sequence analysis of Pseudomonas syringae pv. phaseolicola 1448A reveals divergence among pathovars in genes involved in virulence and transposition.</title>
        <authorList>
            <person name="Joardar V."/>
            <person name="Lindeberg M."/>
            <person name="Jackson R.W."/>
            <person name="Selengut J."/>
            <person name="Dodson R."/>
            <person name="Brinkac L.M."/>
            <person name="Daugherty S.C."/>
            <person name="DeBoy R.T."/>
            <person name="Durkin A.S."/>
            <person name="Gwinn Giglio M."/>
            <person name="Madupu R."/>
            <person name="Nelson W.C."/>
            <person name="Rosovitz M.J."/>
            <person name="Sullivan S.A."/>
            <person name="Crabtree J."/>
            <person name="Creasy T."/>
            <person name="Davidsen T.M."/>
            <person name="Haft D.H."/>
            <person name="Zafar N."/>
            <person name="Zhou L."/>
            <person name="Halpin R."/>
            <person name="Holley T."/>
            <person name="Khouri H.M."/>
            <person name="Feldblyum T.V."/>
            <person name="White O."/>
            <person name="Fraser C.M."/>
            <person name="Chatterjee A.K."/>
            <person name="Cartinhour S."/>
            <person name="Schneider D."/>
            <person name="Mansfield J.W."/>
            <person name="Collmer A."/>
            <person name="Buell R."/>
        </authorList>
    </citation>
    <scope>NUCLEOTIDE SEQUENCE [LARGE SCALE GENOMIC DNA]</scope>
    <source>
        <strain>1448A / Race 6</strain>
    </source>
</reference>
<evidence type="ECO:0000255" key="1">
    <source>
        <dbReference type="HAMAP-Rule" id="MF_01849"/>
    </source>
</evidence>
<evidence type="ECO:0000255" key="2">
    <source>
        <dbReference type="PROSITE-ProRule" id="PRU01266"/>
    </source>
</evidence>
<keyword id="KW-0004">4Fe-4S</keyword>
<keyword id="KW-0963">Cytoplasm</keyword>
<keyword id="KW-1015">Disulfide bond</keyword>
<keyword id="KW-0408">Iron</keyword>
<keyword id="KW-0411">Iron-sulfur</keyword>
<keyword id="KW-0479">Metal-binding</keyword>
<keyword id="KW-0489">Methyltransferase</keyword>
<keyword id="KW-0698">rRNA processing</keyword>
<keyword id="KW-0949">S-adenosyl-L-methionine</keyword>
<keyword id="KW-0808">Transferase</keyword>
<keyword id="KW-0819">tRNA processing</keyword>
<accession>Q48LZ7</accession>
<protein>
    <recommendedName>
        <fullName evidence="1">Dual-specificity RNA methyltransferase RlmN</fullName>
        <ecNumber evidence="1">2.1.1.192</ecNumber>
    </recommendedName>
    <alternativeName>
        <fullName evidence="1">23S rRNA (adenine(2503)-C(2))-methyltransferase</fullName>
    </alternativeName>
    <alternativeName>
        <fullName evidence="1">23S rRNA m2A2503 methyltransferase</fullName>
    </alternativeName>
    <alternativeName>
        <fullName evidence="1">Ribosomal RNA large subunit methyltransferase N</fullName>
    </alternativeName>
    <alternativeName>
        <fullName evidence="1">tRNA (adenine(37)-C(2))-methyltransferase</fullName>
    </alternativeName>
    <alternativeName>
        <fullName evidence="1">tRNA m2A37 methyltransferase</fullName>
    </alternativeName>
</protein>